<dbReference type="EMBL" id="CP000053">
    <property type="protein sequence ID" value="AAY61913.1"/>
    <property type="molecule type" value="Genomic_DNA"/>
</dbReference>
<dbReference type="SMR" id="Q4UKL4"/>
<dbReference type="STRING" id="315456.RF_1062"/>
<dbReference type="KEGG" id="rfe:RF_1062"/>
<dbReference type="eggNOG" id="COG0484">
    <property type="taxonomic scope" value="Bacteria"/>
</dbReference>
<dbReference type="HOGENOM" id="CLU_068529_2_0_5"/>
<dbReference type="OrthoDB" id="287587at2"/>
<dbReference type="Proteomes" id="UP000008548">
    <property type="component" value="Chromosome"/>
</dbReference>
<dbReference type="GO" id="GO:0001671">
    <property type="term" value="F:ATPase activator activity"/>
    <property type="evidence" value="ECO:0007669"/>
    <property type="project" value="InterPro"/>
</dbReference>
<dbReference type="GO" id="GO:0051087">
    <property type="term" value="F:protein-folding chaperone binding"/>
    <property type="evidence" value="ECO:0007669"/>
    <property type="project" value="InterPro"/>
</dbReference>
<dbReference type="GO" id="GO:0044571">
    <property type="term" value="P:[2Fe-2S] cluster assembly"/>
    <property type="evidence" value="ECO:0007669"/>
    <property type="project" value="InterPro"/>
</dbReference>
<dbReference type="GO" id="GO:0051259">
    <property type="term" value="P:protein complex oligomerization"/>
    <property type="evidence" value="ECO:0007669"/>
    <property type="project" value="InterPro"/>
</dbReference>
<dbReference type="GO" id="GO:0006457">
    <property type="term" value="P:protein folding"/>
    <property type="evidence" value="ECO:0007669"/>
    <property type="project" value="UniProtKB-UniRule"/>
</dbReference>
<dbReference type="CDD" id="cd06257">
    <property type="entry name" value="DnaJ"/>
    <property type="match status" value="1"/>
</dbReference>
<dbReference type="Gene3D" id="1.10.287.110">
    <property type="entry name" value="DnaJ domain"/>
    <property type="match status" value="1"/>
</dbReference>
<dbReference type="HAMAP" id="MF_00682">
    <property type="entry name" value="HscB"/>
    <property type="match status" value="1"/>
</dbReference>
<dbReference type="InterPro" id="IPR001623">
    <property type="entry name" value="DnaJ_domain"/>
</dbReference>
<dbReference type="InterPro" id="IPR004640">
    <property type="entry name" value="HscB"/>
</dbReference>
<dbReference type="InterPro" id="IPR036386">
    <property type="entry name" value="HscB_C_sf"/>
</dbReference>
<dbReference type="InterPro" id="IPR036869">
    <property type="entry name" value="J_dom_sf"/>
</dbReference>
<dbReference type="NCBIfam" id="TIGR00714">
    <property type="entry name" value="hscB"/>
    <property type="match status" value="1"/>
</dbReference>
<dbReference type="PANTHER" id="PTHR14021">
    <property type="entry name" value="IRON-SULFUR CLUSTER CO-CHAPERONE PROTEIN HSCB"/>
    <property type="match status" value="1"/>
</dbReference>
<dbReference type="PANTHER" id="PTHR14021:SF15">
    <property type="entry name" value="IRON-SULFUR CLUSTER CO-CHAPERONE PROTEIN HSCB"/>
    <property type="match status" value="1"/>
</dbReference>
<dbReference type="Pfam" id="PF00226">
    <property type="entry name" value="DnaJ"/>
    <property type="match status" value="1"/>
</dbReference>
<dbReference type="SMART" id="SM00271">
    <property type="entry name" value="DnaJ"/>
    <property type="match status" value="1"/>
</dbReference>
<dbReference type="SUPFAM" id="SSF46565">
    <property type="entry name" value="Chaperone J-domain"/>
    <property type="match status" value="1"/>
</dbReference>
<dbReference type="SUPFAM" id="SSF47144">
    <property type="entry name" value="HSC20 (HSCB), C-terminal oligomerisation domain"/>
    <property type="match status" value="1"/>
</dbReference>
<dbReference type="PROSITE" id="PS50076">
    <property type="entry name" value="DNAJ_2"/>
    <property type="match status" value="1"/>
</dbReference>
<protein>
    <recommendedName>
        <fullName evidence="1">Co-chaperone protein HscB homolog</fullName>
    </recommendedName>
</protein>
<proteinExistence type="inferred from homology"/>
<sequence>MQNYFQLLGLPQDYNIDLKILEKQYFAMQVKYHPDKAKTLQEKEQNLITAAELNNAYSTLKDTLKRAEYMLLLQNINLNDEKTRSLLSPLELCIFWDEMEIIENTILFSDLEKIKDKYELMKKLEIDSLKQAFEEQNLSDTIIKTSKLKYIGTLLHKLQEKIKSCK</sequence>
<organism>
    <name type="scientific">Rickettsia felis (strain ATCC VR-1525 / URRWXCal2)</name>
    <name type="common">Rickettsia azadi</name>
    <dbReference type="NCBI Taxonomy" id="315456"/>
    <lineage>
        <taxon>Bacteria</taxon>
        <taxon>Pseudomonadati</taxon>
        <taxon>Pseudomonadota</taxon>
        <taxon>Alphaproteobacteria</taxon>
        <taxon>Rickettsiales</taxon>
        <taxon>Rickettsiaceae</taxon>
        <taxon>Rickettsieae</taxon>
        <taxon>Rickettsia</taxon>
        <taxon>spotted fever group</taxon>
    </lineage>
</organism>
<name>HSCB_RICFE</name>
<gene>
    <name evidence="1" type="primary">hscB</name>
    <name type="ordered locus">RF_1062</name>
</gene>
<keyword id="KW-0143">Chaperone</keyword>
<feature type="chain" id="PRO_0000070984" description="Co-chaperone protein HscB homolog">
    <location>
        <begin position="1"/>
        <end position="166"/>
    </location>
</feature>
<feature type="domain" description="J" evidence="1">
    <location>
        <begin position="3"/>
        <end position="73"/>
    </location>
</feature>
<reference key="1">
    <citation type="journal article" date="2005" name="PLoS Biol.">
        <title>The genome sequence of Rickettsia felis identifies the first putative conjugative plasmid in an obligate intracellular parasite.</title>
        <authorList>
            <person name="Ogata H."/>
            <person name="Renesto P."/>
            <person name="Audic S."/>
            <person name="Robert C."/>
            <person name="Blanc G."/>
            <person name="Fournier P.-E."/>
            <person name="Parinello H."/>
            <person name="Claverie J.-M."/>
            <person name="Raoult D."/>
        </authorList>
    </citation>
    <scope>NUCLEOTIDE SEQUENCE [LARGE SCALE GENOMIC DNA]</scope>
    <source>
        <strain>ATCC VR-1525 / URRWXCal2</strain>
    </source>
</reference>
<evidence type="ECO:0000255" key="1">
    <source>
        <dbReference type="HAMAP-Rule" id="MF_00682"/>
    </source>
</evidence>
<accession>Q4UKL4</accession>
<comment type="function">
    <text evidence="1">Co-chaperone involved in the maturation of iron-sulfur cluster-containing proteins. Seems to help targeting proteins to be folded toward HscA.</text>
</comment>
<comment type="subunit">
    <text evidence="1">Interacts with HscA and stimulates its ATPase activity.</text>
</comment>
<comment type="similarity">
    <text evidence="1">Belongs to the HscB family.</text>
</comment>